<organism>
    <name type="scientific">Escherichia coli</name>
    <dbReference type="NCBI Taxonomy" id="562"/>
    <lineage>
        <taxon>Bacteria</taxon>
        <taxon>Pseudomonadati</taxon>
        <taxon>Pseudomonadota</taxon>
        <taxon>Gammaproteobacteria</taxon>
        <taxon>Enterobacterales</taxon>
        <taxon>Enterobacteriaceae</taxon>
        <taxon>Escherichia</taxon>
    </lineage>
</organism>
<accession>P42502</accession>
<name>KPSF1_ECOLX</name>
<sequence length="317" mass="34474">MSERHLPDDQSSTIDPYLITSVRQTLAEEGARLQNLSKQLDSGQYQRVLNLIMNCKGHVILSGMGKSGHVGRKMSATLASTGTPSFFIHPAEAFHGDLGMITPYDLLILISASGETDEILKLVPSLKNFGNRIIAITNNGNSTLAKNADAVLELHMANETCPNNLAPTTSTTLTMAIGDALAIAMIRQRKFMPNDFARYHPGGSLGRRLLTRVADVMQHDVPAVQLDASFKTVIQRITSGCQGMVMVEDAEGGLAGIITDGDLRRFMEKEDSLTSATAAQMMTREPLTLPEDTMIIEAEEKMQKDKCLNVIGDQQGK</sequence>
<keyword id="KW-0067">ATP-binding</keyword>
<keyword id="KW-0129">CBS domain</keyword>
<keyword id="KW-0413">Isomerase</keyword>
<keyword id="KW-0448">Lipopolysaccharide biosynthesis</keyword>
<keyword id="KW-0479">Metal-binding</keyword>
<keyword id="KW-0547">Nucleotide-binding</keyword>
<keyword id="KW-0677">Repeat</keyword>
<keyword id="KW-0862">Zinc</keyword>
<protein>
    <recommendedName>
        <fullName>Arabinose 5-phosphate isomerase KpsF</fullName>
        <shortName>API</shortName>
        <ecNumber>5.3.1.13</ecNumber>
    </recommendedName>
    <alternativeName>
        <fullName>K-antigen-specific arabinose 5-phosphate isomerase</fullName>
        <shortName>K-API</shortName>
    </alternativeName>
    <alternativeName>
        <fullName>Polysialic acid capsule expression protein kpsF</fullName>
    </alternativeName>
</protein>
<comment type="function">
    <text evidence="1">Involved in the biosynthesis of K-antigen capsules. Catalyzes the reversible aldol-ketol isomerization between D-ribulose 5-phosphate (Ru5P) and D-arabinose 5-phosphate (A5P) (By similarity).</text>
</comment>
<comment type="catalytic activity">
    <reaction>
        <text>D-arabinose 5-phosphate = D-ribulose 5-phosphate</text>
        <dbReference type="Rhea" id="RHEA:23104"/>
        <dbReference type="ChEBI" id="CHEBI:57693"/>
        <dbReference type="ChEBI" id="CHEBI:58121"/>
        <dbReference type="EC" id="5.3.1.13"/>
    </reaction>
</comment>
<comment type="subunit">
    <text evidence="1">Homotetramer.</text>
</comment>
<comment type="similarity">
    <text evidence="5">Belongs to the SIS family. GutQ/KpsF subfamily.</text>
</comment>
<evidence type="ECO:0000250" key="1"/>
<evidence type="ECO:0000255" key="2"/>
<evidence type="ECO:0000255" key="3">
    <source>
        <dbReference type="PROSITE-ProRule" id="PRU00703"/>
    </source>
</evidence>
<evidence type="ECO:0000255" key="4">
    <source>
        <dbReference type="PROSITE-ProRule" id="PRU00797"/>
    </source>
</evidence>
<evidence type="ECO:0000305" key="5"/>
<feature type="chain" id="PRO_0000136573" description="Arabinose 5-phosphate isomerase KpsF">
    <location>
        <begin position="1"/>
        <end position="317"/>
    </location>
</feature>
<feature type="domain" description="SIS" evidence="4">
    <location>
        <begin position="48"/>
        <end position="191"/>
    </location>
</feature>
<feature type="domain" description="CBS 1" evidence="3">
    <location>
        <begin position="217"/>
        <end position="273"/>
    </location>
</feature>
<feature type="domain" description="CBS 2" evidence="3">
    <location>
        <begin position="282"/>
        <end position="317"/>
    </location>
</feature>
<feature type="binding site" evidence="2">
    <location>
        <begin position="63"/>
        <end position="68"/>
    </location>
    <ligand>
        <name>ATP</name>
        <dbReference type="ChEBI" id="CHEBI:30616"/>
    </ligand>
</feature>
<feature type="binding site" evidence="1">
    <location>
        <begin position="82"/>
        <end position="83"/>
    </location>
    <ligand>
        <name>substrate</name>
    </ligand>
</feature>
<feature type="binding site" evidence="1">
    <location>
        <position position="89"/>
    </location>
    <ligand>
        <name>substrate</name>
    </ligand>
</feature>
<feature type="binding site" evidence="1">
    <location>
        <position position="89"/>
    </location>
    <ligand>
        <name>Zn(2+)</name>
        <dbReference type="ChEBI" id="CHEBI:29105"/>
    </ligand>
</feature>
<feature type="binding site" evidence="1">
    <location>
        <position position="95"/>
    </location>
    <ligand>
        <name>substrate</name>
    </ligand>
</feature>
<feature type="binding site" evidence="1">
    <location>
        <begin position="121"/>
        <end position="130"/>
    </location>
    <ligand>
        <name>substrate</name>
    </ligand>
</feature>
<feature type="binding site" evidence="1">
    <location>
        <begin position="155"/>
        <end position="157"/>
    </location>
    <ligand>
        <name>substrate</name>
    </ligand>
</feature>
<feature type="site" description="Catalytically relevant" evidence="1">
    <location>
        <position position="66"/>
    </location>
</feature>
<feature type="site" description="Catalytically relevant" evidence="1">
    <location>
        <position position="118"/>
    </location>
</feature>
<feature type="site" description="Catalytically relevant" evidence="1">
    <location>
        <position position="159"/>
    </location>
</feature>
<feature type="site" description="Catalytically relevant" evidence="1">
    <location>
        <position position="200"/>
    </location>
</feature>
<proteinExistence type="inferred from homology"/>
<dbReference type="EC" id="5.3.1.13"/>
<dbReference type="EMBL" id="L19929">
    <property type="protein sequence ID" value="AAB51623.1"/>
    <property type="molecule type" value="Genomic_DNA"/>
</dbReference>
<dbReference type="PIR" id="A49915">
    <property type="entry name" value="A49915"/>
</dbReference>
<dbReference type="SMR" id="P42502"/>
<dbReference type="GO" id="GO:0019146">
    <property type="term" value="F:arabinose-5-phosphate isomerase activity"/>
    <property type="evidence" value="ECO:0007669"/>
    <property type="project" value="UniProtKB-EC"/>
</dbReference>
<dbReference type="GO" id="GO:0005524">
    <property type="term" value="F:ATP binding"/>
    <property type="evidence" value="ECO:0007669"/>
    <property type="project" value="UniProtKB-KW"/>
</dbReference>
<dbReference type="GO" id="GO:0046872">
    <property type="term" value="F:metal ion binding"/>
    <property type="evidence" value="ECO:0007669"/>
    <property type="project" value="UniProtKB-KW"/>
</dbReference>
<dbReference type="GO" id="GO:0009103">
    <property type="term" value="P:lipopolysaccharide biosynthetic process"/>
    <property type="evidence" value="ECO:0007669"/>
    <property type="project" value="UniProtKB-KW"/>
</dbReference>
<dbReference type="CDD" id="cd04604">
    <property type="entry name" value="CBS_pair_SIS_assoc"/>
    <property type="match status" value="1"/>
</dbReference>
<dbReference type="CDD" id="cd05014">
    <property type="entry name" value="SIS_Kpsf"/>
    <property type="match status" value="1"/>
</dbReference>
<dbReference type="FunFam" id="3.40.50.10490:FF:000011">
    <property type="entry name" value="Arabinose 5-phosphate isomerase"/>
    <property type="match status" value="1"/>
</dbReference>
<dbReference type="Gene3D" id="3.10.580.10">
    <property type="entry name" value="CBS-domain"/>
    <property type="match status" value="1"/>
</dbReference>
<dbReference type="Gene3D" id="3.40.50.10490">
    <property type="entry name" value="Glucose-6-phosphate isomerase like protein, domain 1"/>
    <property type="match status" value="1"/>
</dbReference>
<dbReference type="InterPro" id="IPR000644">
    <property type="entry name" value="CBS_dom"/>
</dbReference>
<dbReference type="InterPro" id="IPR046342">
    <property type="entry name" value="CBS_dom_sf"/>
</dbReference>
<dbReference type="InterPro" id="IPR050986">
    <property type="entry name" value="GutQ/KpsF_isomerases"/>
</dbReference>
<dbReference type="InterPro" id="IPR004800">
    <property type="entry name" value="KdsD/KpsF-type"/>
</dbReference>
<dbReference type="InterPro" id="IPR001347">
    <property type="entry name" value="SIS_dom"/>
</dbReference>
<dbReference type="InterPro" id="IPR046348">
    <property type="entry name" value="SIS_dom_sf"/>
</dbReference>
<dbReference type="InterPro" id="IPR035474">
    <property type="entry name" value="SIS_Kpsf"/>
</dbReference>
<dbReference type="NCBIfam" id="TIGR00393">
    <property type="entry name" value="kpsF"/>
    <property type="match status" value="1"/>
</dbReference>
<dbReference type="PANTHER" id="PTHR42745">
    <property type="match status" value="1"/>
</dbReference>
<dbReference type="PANTHER" id="PTHR42745:SF1">
    <property type="entry name" value="ARABINOSE 5-PHOSPHATE ISOMERASE KDSD"/>
    <property type="match status" value="1"/>
</dbReference>
<dbReference type="Pfam" id="PF00571">
    <property type="entry name" value="CBS"/>
    <property type="match status" value="2"/>
</dbReference>
<dbReference type="Pfam" id="PF01380">
    <property type="entry name" value="SIS"/>
    <property type="match status" value="1"/>
</dbReference>
<dbReference type="PIRSF" id="PIRSF004692">
    <property type="entry name" value="KdsD_KpsF"/>
    <property type="match status" value="1"/>
</dbReference>
<dbReference type="SUPFAM" id="SSF53697">
    <property type="entry name" value="SIS domain"/>
    <property type="match status" value="1"/>
</dbReference>
<dbReference type="PROSITE" id="PS51371">
    <property type="entry name" value="CBS"/>
    <property type="match status" value="2"/>
</dbReference>
<dbReference type="PROSITE" id="PS51464">
    <property type="entry name" value="SIS"/>
    <property type="match status" value="1"/>
</dbReference>
<reference key="1">
    <citation type="journal article" date="1993" name="J. Bacteriol.">
        <title>Cloning, sequencing, expression, and complementation analysis of the Escherichia coli K1 kps region 1 gene, kpsE, and identification of an upstream open reading frame encoding a protein with homology to GutQ.</title>
        <authorList>
            <person name="Cieslewicz M.J."/>
            <person name="Steenbergen S.M."/>
            <person name="Vimr E.R."/>
        </authorList>
    </citation>
    <scope>NUCLEOTIDE SEQUENCE [GENOMIC DNA]</scope>
    <source>
        <strain>K1</strain>
    </source>
</reference>
<gene>
    <name type="primary">kpsF</name>
</gene>